<keyword id="KW-0002">3D-structure</keyword>
<keyword id="KW-0456">Lyase</keyword>
<keyword id="KW-0556">Organic radical</keyword>
<keyword id="KW-1185">Reference proteome</keyword>
<dbReference type="EC" id="4.3.99.4" evidence="1 4"/>
<dbReference type="EMBL" id="CP000112">
    <property type="protein sequence ID" value="ABB40076.1"/>
    <property type="molecule type" value="Genomic_DNA"/>
</dbReference>
<dbReference type="RefSeq" id="WP_011369019.1">
    <property type="nucleotide sequence ID" value="NC_007519.1"/>
</dbReference>
<dbReference type="PDB" id="5FAU">
    <property type="method" value="X-ray"/>
    <property type="resolution" value="1.90 A"/>
    <property type="chains" value="A/B/C/D=19-846"/>
</dbReference>
<dbReference type="PDB" id="5FAV">
    <property type="method" value="X-ray"/>
    <property type="resolution" value="1.60 A"/>
    <property type="chains" value="A/B=53-846"/>
</dbReference>
<dbReference type="PDB" id="5FAW">
    <property type="method" value="X-ray"/>
    <property type="resolution" value="1.85 A"/>
    <property type="chains" value="A/B=53-846"/>
</dbReference>
<dbReference type="PDB" id="5FAY">
    <property type="method" value="X-ray"/>
    <property type="resolution" value="1.90 A"/>
    <property type="chains" value="A/B=53-846"/>
</dbReference>
<dbReference type="PDB" id="5KDP">
    <property type="method" value="X-ray"/>
    <property type="resolution" value="1.90 A"/>
    <property type="chains" value="A/C=53-846"/>
</dbReference>
<dbReference type="PDB" id="6ND3">
    <property type="method" value="X-ray"/>
    <property type="resolution" value="2.36 A"/>
    <property type="chains" value="A/B/C/D/E/F/G/H=19-846"/>
</dbReference>
<dbReference type="PDB" id="6VUE">
    <property type="method" value="X-ray"/>
    <property type="resolution" value="2.28 A"/>
    <property type="chains" value="A/B=53-846"/>
</dbReference>
<dbReference type="PDBsum" id="5FAU"/>
<dbReference type="PDBsum" id="5FAV"/>
<dbReference type="PDBsum" id="5FAW"/>
<dbReference type="PDBsum" id="5FAY"/>
<dbReference type="PDBsum" id="5KDP"/>
<dbReference type="PDBsum" id="6ND3"/>
<dbReference type="PDBsum" id="6VUE"/>
<dbReference type="SMR" id="Q30W70"/>
<dbReference type="STRING" id="207559.Dde_3282"/>
<dbReference type="BindingDB" id="Q30W70"/>
<dbReference type="ChEMBL" id="CHEMBL4739856"/>
<dbReference type="KEGG" id="dde:Dde_3282"/>
<dbReference type="eggNOG" id="COG1882">
    <property type="taxonomic scope" value="Bacteria"/>
</dbReference>
<dbReference type="HOGENOM" id="CLU_009096_0_1_7"/>
<dbReference type="BioCyc" id="MetaCyc:MONOMER-17848"/>
<dbReference type="BRENDA" id="4.3.99.4">
    <property type="organism ID" value="1902"/>
</dbReference>
<dbReference type="UniPathway" id="UPA01069"/>
<dbReference type="Proteomes" id="UP000002710">
    <property type="component" value="Chromosome"/>
</dbReference>
<dbReference type="GO" id="GO:0005829">
    <property type="term" value="C:cytosol"/>
    <property type="evidence" value="ECO:0007669"/>
    <property type="project" value="TreeGrafter"/>
</dbReference>
<dbReference type="GO" id="GO:0016840">
    <property type="term" value="F:carbon-nitrogen lyase activity"/>
    <property type="evidence" value="ECO:0000314"/>
    <property type="project" value="UniProtKB"/>
</dbReference>
<dbReference type="GO" id="GO:0033265">
    <property type="term" value="F:choline binding"/>
    <property type="evidence" value="ECO:0000314"/>
    <property type="project" value="UniProtKB"/>
</dbReference>
<dbReference type="GO" id="GO:0120525">
    <property type="term" value="F:choline trimethylamine lyase activity"/>
    <property type="evidence" value="ECO:0007669"/>
    <property type="project" value="UniProtKB-EC"/>
</dbReference>
<dbReference type="GO" id="GO:0042803">
    <property type="term" value="F:protein homodimerization activity"/>
    <property type="evidence" value="ECO:0000314"/>
    <property type="project" value="UniProtKB"/>
</dbReference>
<dbReference type="GO" id="GO:0042426">
    <property type="term" value="P:choline catabolic process"/>
    <property type="evidence" value="ECO:0000314"/>
    <property type="project" value="UniProtKB"/>
</dbReference>
<dbReference type="CDD" id="cd01677">
    <property type="entry name" value="PFL2_DhaB_BssA"/>
    <property type="match status" value="1"/>
</dbReference>
<dbReference type="Gene3D" id="3.20.70.20">
    <property type="match status" value="1"/>
</dbReference>
<dbReference type="HAMAP" id="MF_02058">
    <property type="entry name" value="Choline_CutC"/>
    <property type="match status" value="1"/>
</dbReference>
<dbReference type="InterPro" id="IPR030897">
    <property type="entry name" value="Choline_CutC"/>
</dbReference>
<dbReference type="InterPro" id="IPR019777">
    <property type="entry name" value="Form_AcTrfase_GR_CS"/>
</dbReference>
<dbReference type="InterPro" id="IPR001150">
    <property type="entry name" value="Gly_radical"/>
</dbReference>
<dbReference type="InterPro" id="IPR051215">
    <property type="entry name" value="GRE"/>
</dbReference>
<dbReference type="InterPro" id="IPR004184">
    <property type="entry name" value="PFL_dom"/>
</dbReference>
<dbReference type="NCBIfam" id="TIGR04394">
    <property type="entry name" value="choline_CutC"/>
    <property type="match status" value="1"/>
</dbReference>
<dbReference type="PANTHER" id="PTHR43641:SF2">
    <property type="entry name" value="DEHYDRATASE YBIW-RELATED"/>
    <property type="match status" value="1"/>
</dbReference>
<dbReference type="PANTHER" id="PTHR43641">
    <property type="entry name" value="FORMATE ACETYLTRANSFERASE 3-RELATED"/>
    <property type="match status" value="1"/>
</dbReference>
<dbReference type="Pfam" id="PF01228">
    <property type="entry name" value="Gly_radical"/>
    <property type="match status" value="1"/>
</dbReference>
<dbReference type="Pfam" id="PF02901">
    <property type="entry name" value="PFL-like"/>
    <property type="match status" value="1"/>
</dbReference>
<dbReference type="SUPFAM" id="SSF51998">
    <property type="entry name" value="PFL-like glycyl radical enzymes"/>
    <property type="match status" value="1"/>
</dbReference>
<dbReference type="PROSITE" id="PS00850">
    <property type="entry name" value="GLY_RADICAL_1"/>
    <property type="match status" value="1"/>
</dbReference>
<dbReference type="PROSITE" id="PS51149">
    <property type="entry name" value="GLY_RADICAL_2"/>
    <property type="match status" value="1"/>
</dbReference>
<dbReference type="PROSITE" id="PS51554">
    <property type="entry name" value="PFL"/>
    <property type="match status" value="1"/>
</dbReference>
<accession>Q30W70</accession>
<proteinExistence type="evidence at protein level"/>
<evidence type="ECO:0000255" key="1">
    <source>
        <dbReference type="HAMAP-Rule" id="MF_02058"/>
    </source>
</evidence>
<evidence type="ECO:0000255" key="2">
    <source>
        <dbReference type="PROSITE-ProRule" id="PRU00493"/>
    </source>
</evidence>
<evidence type="ECO:0000255" key="3">
    <source>
        <dbReference type="PROSITE-ProRule" id="PRU00887"/>
    </source>
</evidence>
<evidence type="ECO:0000269" key="4">
    <source>
    </source>
</evidence>
<evidence type="ECO:0000269" key="5">
    <source>
    </source>
</evidence>
<evidence type="ECO:0000303" key="6">
    <source>
    </source>
</evidence>
<evidence type="ECO:0000303" key="7">
    <source>
    </source>
</evidence>
<evidence type="ECO:0000305" key="8"/>
<evidence type="ECO:0000305" key="9">
    <source>
    </source>
</evidence>
<evidence type="ECO:0000305" key="10">
    <source>
    </source>
</evidence>
<evidence type="ECO:0000312" key="11">
    <source>
        <dbReference type="EMBL" id="ABB40076.1"/>
    </source>
</evidence>
<evidence type="ECO:0007829" key="12">
    <source>
        <dbReference type="PDB" id="5FAV"/>
    </source>
</evidence>
<name>CUTC_OLEA2</name>
<sequence length="846" mass="94640">MDLQDFSHKLAEATKNLTPAERASLKKIFEGVSAEVFSQPAPVSAVATGAESGIPDGPTPRHVKLKENFLKQVPSITVQRAVAITKIAKENPGLPKPLLRAKTFRYCCETAPLVIQDHELIVGSPNGAPRAGAFSPEVAWRWLQDELDTIGSRPQDPFYISEEDKKVLREEVFPFWQNKSVDEFCEGQYREADLWEMSGESFVSDCSYHAVNGGGDSNPGYDVILMKKGMLDIQREAREKLEQLDYANPEDIDKIYFYKSVIETAEGVMIYARRLSAYAAELAARETDPRRKAELQKISEVNARVPAHAPSNFWEAIQAVWTVESLLVVEENQTGMSIGRVDQYMYPFYRADIDSGRLTEYEAFDLAGCMLVKMSEMMWITSEGASKFFAGYQPFVNMCVGGVTREGHDATNDLTYMLMDAVRHVRIYQPTLATRVHNKSPQKYLKKIVDVIRSGMGFPAVHFDDAHIKMMLAKGVSIEDARDYCLMGCVEPQKSGRLYQWTSTGYTQWPICIELVLNHGVPLWYGKKVTPDMGDLSQYDTYEKFEAAVKEQIRWITKNTSVATVISQRAHRELAPKPLMSLMYEGCMESGRDVSAGGAMYNFGPGVVWSGLATYVDSMAAIKKLVYDDRKYTLAQLNEALKADFAGYDQILADCLAAPKYGNDDDYADMIAADLVHFTETEHRKYKTLYSVLSHGTLSISNNTPFGQLLGASANGRRAWMPLSDGISPTQGADYKGPTAIIKSVSKMANDNMNIGMVHNFKLMSGLLDTPEGENGLITLIRTACMLGNGEMQFNYLDNELLLDAQKHPEKYRDLVVRVAGYSAFFVELCKDVQDEIISRTMLHGF</sequence>
<organism>
    <name type="scientific">Oleidesulfovibrio alaskensis (strain ATCC BAA-1058 / DSM 17464 / G20)</name>
    <name type="common">Desulfovibrio alaskensis</name>
    <dbReference type="NCBI Taxonomy" id="207559"/>
    <lineage>
        <taxon>Bacteria</taxon>
        <taxon>Pseudomonadati</taxon>
        <taxon>Thermodesulfobacteriota</taxon>
        <taxon>Desulfovibrionia</taxon>
        <taxon>Desulfovibrionales</taxon>
        <taxon>Desulfovibrionaceae</taxon>
        <taxon>Oleidesulfovibrio</taxon>
    </lineage>
</organism>
<gene>
    <name evidence="1 6" type="primary">cutC</name>
    <name evidence="11" type="ordered locus">Dde_3282</name>
</gene>
<feature type="chain" id="PRO_0000435665" description="Choline trimethylamine-lyase">
    <location>
        <begin position="1"/>
        <end position="846"/>
    </location>
</feature>
<feature type="domain" description="PFL" evidence="3">
    <location>
        <begin position="60"/>
        <end position="718"/>
    </location>
</feature>
<feature type="domain" description="Glycine radical" evidence="2">
    <location>
        <begin position="725"/>
        <end position="846"/>
    </location>
</feature>
<feature type="active site" description="Cysteine radical intermediate" evidence="1 9 10">
    <location>
        <position position="489"/>
    </location>
</feature>
<feature type="active site" description="Proton acceptor" evidence="1 10">
    <location>
        <position position="491"/>
    </location>
</feature>
<feature type="modified residue" description="Glycine radical" evidence="1 9 10">
    <location>
        <position position="821"/>
    </location>
</feature>
<feature type="mutagenesis site" description="Loss of catalytic activity." evidence="5">
    <original>D</original>
    <variation>N</variation>
    <location>
        <position position="216"/>
    </location>
</feature>
<feature type="mutagenesis site" description="About 2-fold decrease in catalytic activity." evidence="5">
    <original>T</original>
    <variation>S</variation>
    <location>
        <position position="334"/>
    </location>
</feature>
<feature type="mutagenesis site" description="Loss of catalytic activity." evidence="5">
    <original>F</original>
    <variation>L</variation>
    <location>
        <position position="395"/>
    </location>
</feature>
<feature type="mutagenesis site" description="Loss of catalytic activity. Still activated by CutD but the remaining alpha-proton of the glycyl radical is no longer exchangeable." evidence="4 5">
    <original>C</original>
    <variation>A</variation>
    <location>
        <position position="489"/>
    </location>
</feature>
<feature type="mutagenesis site" description="Loss of catalytic activity." evidence="5">
    <original>E</original>
    <variation>Q</variation>
    <location>
        <position position="491"/>
    </location>
</feature>
<feature type="mutagenesis site" description="About 3-fold decrease in catalytic activity." evidence="5">
    <original>T</original>
    <variation>S</variation>
    <location>
        <position position="502"/>
    </location>
</feature>
<feature type="mutagenesis site" description="Loss of catalytic activity." evidence="4 5">
    <original>G</original>
    <variation>A</variation>
    <location>
        <position position="821"/>
    </location>
</feature>
<feature type="helix" evidence="12">
    <location>
        <begin position="60"/>
        <end position="70"/>
    </location>
</feature>
<feature type="strand" evidence="12">
    <location>
        <begin position="75"/>
        <end position="77"/>
    </location>
</feature>
<feature type="helix" evidence="12">
    <location>
        <begin position="79"/>
        <end position="90"/>
    </location>
</feature>
<feature type="helix" evidence="12">
    <location>
        <begin position="96"/>
        <end position="110"/>
    </location>
</feature>
<feature type="strand" evidence="12">
    <location>
        <begin position="131"/>
        <end position="133"/>
    </location>
</feature>
<feature type="turn" evidence="12">
    <location>
        <begin position="136"/>
        <end position="138"/>
    </location>
</feature>
<feature type="helix" evidence="12">
    <location>
        <begin position="141"/>
        <end position="146"/>
    </location>
</feature>
<feature type="turn" evidence="12">
    <location>
        <begin position="147"/>
        <end position="152"/>
    </location>
</feature>
<feature type="strand" evidence="12">
    <location>
        <begin position="154"/>
        <end position="156"/>
    </location>
</feature>
<feature type="helix" evidence="12">
    <location>
        <begin position="162"/>
        <end position="170"/>
    </location>
</feature>
<feature type="helix" evidence="12">
    <location>
        <begin position="172"/>
        <end position="176"/>
    </location>
</feature>
<feature type="turn" evidence="12">
    <location>
        <begin position="177"/>
        <end position="179"/>
    </location>
</feature>
<feature type="helix" evidence="12">
    <location>
        <begin position="181"/>
        <end position="191"/>
    </location>
</feature>
<feature type="helix" evidence="12">
    <location>
        <begin position="195"/>
        <end position="198"/>
    </location>
</feature>
<feature type="strand" evidence="12">
    <location>
        <begin position="203"/>
        <end position="205"/>
    </location>
</feature>
<feature type="helix" evidence="12">
    <location>
        <begin position="208"/>
        <end position="211"/>
    </location>
</feature>
<feature type="helix" evidence="12">
    <location>
        <begin position="221"/>
        <end position="225"/>
    </location>
</feature>
<feature type="helix" evidence="12">
    <location>
        <begin position="230"/>
        <end position="242"/>
    </location>
</feature>
<feature type="helix" evidence="12">
    <location>
        <begin position="249"/>
        <end position="251"/>
    </location>
</feature>
<feature type="helix" evidence="12">
    <location>
        <begin position="252"/>
        <end position="285"/>
    </location>
</feature>
<feature type="helix" evidence="12">
    <location>
        <begin position="289"/>
        <end position="304"/>
    </location>
</feature>
<feature type="turn" evidence="12">
    <location>
        <begin position="305"/>
        <end position="307"/>
    </location>
</feature>
<feature type="helix" evidence="12">
    <location>
        <begin position="313"/>
        <end position="330"/>
    </location>
</feature>
<feature type="helix" evidence="12">
    <location>
        <begin position="341"/>
        <end position="344"/>
    </location>
</feature>
<feature type="helix" evidence="12">
    <location>
        <begin position="346"/>
        <end position="355"/>
    </location>
</feature>
<feature type="strand" evidence="12">
    <location>
        <begin position="356"/>
        <end position="358"/>
    </location>
</feature>
<feature type="helix" evidence="12">
    <location>
        <begin position="360"/>
        <end position="375"/>
    </location>
</feature>
<feature type="helix" evidence="12">
    <location>
        <begin position="383"/>
        <end position="386"/>
    </location>
</feature>
<feature type="helix" evidence="12">
    <location>
        <begin position="387"/>
        <end position="389"/>
    </location>
</feature>
<feature type="turn" evidence="12">
    <location>
        <begin position="390"/>
        <end position="392"/>
    </location>
</feature>
<feature type="strand" evidence="12">
    <location>
        <begin position="397"/>
        <end position="403"/>
    </location>
</feature>
<feature type="strand" evidence="12">
    <location>
        <begin position="407"/>
        <end position="409"/>
    </location>
</feature>
<feature type="helix" evidence="12">
    <location>
        <begin position="413"/>
        <end position="425"/>
    </location>
</feature>
<feature type="strand" evidence="12">
    <location>
        <begin position="430"/>
        <end position="436"/>
    </location>
</feature>
<feature type="helix" evidence="12">
    <location>
        <begin position="442"/>
        <end position="453"/>
    </location>
</feature>
<feature type="strand" evidence="12">
    <location>
        <begin position="460"/>
        <end position="463"/>
    </location>
</feature>
<feature type="helix" evidence="12">
    <location>
        <begin position="464"/>
        <end position="473"/>
    </location>
</feature>
<feature type="helix" evidence="12">
    <location>
        <begin position="478"/>
        <end position="482"/>
    </location>
</feature>
<feature type="strand" evidence="12">
    <location>
        <begin position="485"/>
        <end position="487"/>
    </location>
</feature>
<feature type="turn" evidence="12">
    <location>
        <begin position="488"/>
        <end position="490"/>
    </location>
</feature>
<feature type="strand" evidence="12">
    <location>
        <begin position="491"/>
        <end position="493"/>
    </location>
</feature>
<feature type="turn" evidence="12">
    <location>
        <begin position="495"/>
        <end position="497"/>
    </location>
</feature>
<feature type="strand" evidence="12">
    <location>
        <begin position="503"/>
        <end position="509"/>
    </location>
</feature>
<feature type="helix" evidence="12">
    <location>
        <begin position="510"/>
        <end position="517"/>
    </location>
</feature>
<feature type="turn" evidence="12">
    <location>
        <begin position="518"/>
        <end position="520"/>
    </location>
</feature>
<feature type="turn" evidence="12">
    <location>
        <begin position="523"/>
        <end position="525"/>
    </location>
</feature>
<feature type="helix" evidence="12">
    <location>
        <begin position="536"/>
        <end position="538"/>
    </location>
</feature>
<feature type="helix" evidence="12">
    <location>
        <begin position="542"/>
        <end position="574"/>
    </location>
</feature>
<feature type="helix" evidence="12">
    <location>
        <begin position="578"/>
        <end position="582"/>
    </location>
</feature>
<feature type="helix" evidence="12">
    <location>
        <begin position="587"/>
        <end position="590"/>
    </location>
</feature>
<feature type="helix" evidence="12">
    <location>
        <begin position="594"/>
        <end position="596"/>
    </location>
</feature>
<feature type="strand" evidence="12">
    <location>
        <begin position="599"/>
        <end position="602"/>
    </location>
</feature>
<feature type="strand" evidence="12">
    <location>
        <begin position="606"/>
        <end position="610"/>
    </location>
</feature>
<feature type="helix" evidence="12">
    <location>
        <begin position="612"/>
        <end position="626"/>
    </location>
</feature>
<feature type="helix" evidence="12">
    <location>
        <begin position="634"/>
        <end position="642"/>
    </location>
</feature>
<feature type="turn" evidence="12">
    <location>
        <begin position="643"/>
        <end position="647"/>
    </location>
</feature>
<feature type="helix" evidence="12">
    <location>
        <begin position="649"/>
        <end position="657"/>
    </location>
</feature>
<feature type="helix" evidence="12">
    <location>
        <begin position="666"/>
        <end position="683"/>
    </location>
</feature>
<feature type="strand" evidence="12">
    <location>
        <begin position="689"/>
        <end position="692"/>
    </location>
</feature>
<feature type="strand" evidence="12">
    <location>
        <begin position="694"/>
        <end position="697"/>
    </location>
</feature>
<feature type="turn" evidence="12">
    <location>
        <begin position="700"/>
        <end position="702"/>
    </location>
</feature>
<feature type="helix" evidence="12">
    <location>
        <begin position="703"/>
        <end position="708"/>
    </location>
</feature>
<feature type="turn" evidence="12">
    <location>
        <begin position="731"/>
        <end position="733"/>
    </location>
</feature>
<feature type="helix" evidence="12">
    <location>
        <begin position="738"/>
        <end position="746"/>
    </location>
</feature>
<feature type="helix" evidence="12">
    <location>
        <begin position="750"/>
        <end position="752"/>
    </location>
</feature>
<feature type="strand" evidence="12">
    <location>
        <begin position="760"/>
        <end position="764"/>
    </location>
</feature>
<feature type="helix" evidence="12">
    <location>
        <begin position="767"/>
        <end position="769"/>
    </location>
</feature>
<feature type="helix" evidence="12">
    <location>
        <begin position="771"/>
        <end position="787"/>
    </location>
</feature>
<feature type="strand" evidence="12">
    <location>
        <begin position="791"/>
        <end position="797"/>
    </location>
</feature>
<feature type="helix" evidence="12">
    <location>
        <begin position="799"/>
        <end position="807"/>
    </location>
</feature>
<feature type="helix" evidence="12">
    <location>
        <begin position="809"/>
        <end position="811"/>
    </location>
</feature>
<feature type="strand" evidence="12">
    <location>
        <begin position="816"/>
        <end position="818"/>
    </location>
</feature>
<feature type="strand" evidence="12">
    <location>
        <begin position="820"/>
        <end position="825"/>
    </location>
</feature>
<feature type="helix" evidence="12">
    <location>
        <begin position="826"/>
        <end position="828"/>
    </location>
</feature>
<feature type="helix" evidence="12">
    <location>
        <begin position="831"/>
        <end position="839"/>
    </location>
</feature>
<reference key="1">
    <citation type="journal article" date="2011" name="J. Bacteriol.">
        <title>Complete genome sequence and updated annotation of Desulfovibrio alaskensis G20.</title>
        <authorList>
            <person name="Hauser L.J."/>
            <person name="Land M.L."/>
            <person name="Brown S.D."/>
            <person name="Larimer F."/>
            <person name="Keller K.L."/>
            <person name="Rapp-Giles B.J."/>
            <person name="Price M.N."/>
            <person name="Lin M."/>
            <person name="Bruce D.C."/>
            <person name="Detter J.C."/>
            <person name="Tapia R."/>
            <person name="Han C.S."/>
            <person name="Goodwin L.A."/>
            <person name="Cheng J.F."/>
            <person name="Pitluck S."/>
            <person name="Copeland A."/>
            <person name="Lucas S."/>
            <person name="Nolan M."/>
            <person name="Lapidus A.L."/>
            <person name="Palumbo A.V."/>
            <person name="Wall J.D."/>
        </authorList>
    </citation>
    <scope>NUCLEOTIDE SEQUENCE [LARGE SCALE GENOMIC DNA]</scope>
    <source>
        <strain>ATCC BAA-1058 / DSM 17464 / G20</strain>
    </source>
</reference>
<reference key="2">
    <citation type="journal article" date="2012" name="Proc. Natl. Acad. Sci. U.S.A.">
        <title>Microbial conversion of choline to trimethylamine requires a glycyl radical enzyme.</title>
        <authorList>
            <person name="Craciun S."/>
            <person name="Balskus E.P."/>
        </authorList>
    </citation>
    <scope>IDENTIFICATION</scope>
    <scope>FUNCTION</scope>
    <scope>CATALYTIC ACTIVITY</scope>
    <scope>DISRUPTION PHENOTYPE</scope>
    <scope>GLYCYL RADICAL AT GLY-821</scope>
    <scope>PATHWAY</scope>
    <scope>MUTAGENESIS OF CYS-489 AND GLY-821</scope>
    <source>
        <strain>ATCC BAA-1058 / DSM 17464 / G20</strain>
    </source>
</reference>
<reference key="3">
    <citation type="journal article" date="2014" name="ACS Chem. Biol.">
        <title>Characterization of choline trimethylamine-lyase expands the chemistry of glycyl radical enzymes.</title>
        <authorList>
            <person name="Craciun S."/>
            <person name="Marks J.A."/>
            <person name="Balskus E.P."/>
        </authorList>
    </citation>
    <scope>FUNCTION</scope>
    <scope>CATALYTIC ACTIVITY</scope>
    <scope>BIOPHYSICOCHEMICAL PROPERTIES</scope>
    <scope>SUBSTRATE SPECIFICITY</scope>
    <scope>SUBUNIT</scope>
    <scope>MUTAGENESIS OF ASP-216; THR-334; PHE-395; CYS-489; GLU-491; THR-502 AND GLY-821</scope>
    <scope>REACTION MECHANISM</scope>
    <scope>3D-STRUCTURE MODELING</scope>
    <source>
        <strain>ATCC BAA-1058 / DSM 17464 / G20</strain>
    </source>
</reference>
<protein>
    <recommendedName>
        <fullName evidence="1 6">Choline trimethylamine-lyase</fullName>
        <shortName evidence="1 6">Choline TMA-lyase</shortName>
        <ecNumber evidence="1 4">4.3.99.4</ecNumber>
    </recommendedName>
    <alternativeName>
        <fullName evidence="1 6">Choline utilization protein C</fullName>
    </alternativeName>
    <alternativeName>
        <fullName evidence="6">Glycyl radical enzyme CutC</fullName>
        <shortName evidence="7">GRE CutC</shortName>
    </alternativeName>
</protein>
<comment type="function">
    <text evidence="4 5">Glycine radical enzyme that catalyzes the cleavage of a C-N bond in choline, producing trimethylamine (TMA) and acetaldehyde (PubMed:23151509, PubMed:24854437). Is involved in the anaerobic choline utilization pathway that allows D.alaskensis to grow on choline as a source of carbon and energy (PubMed:23151509). Is strictly specific for choline as substrate (PubMed:24854437).</text>
</comment>
<comment type="catalytic activity">
    <reaction evidence="1 4">
        <text>choline = trimethylamine + acetaldehyde</text>
        <dbReference type="Rhea" id="RHEA:35095"/>
        <dbReference type="ChEBI" id="CHEBI:15343"/>
        <dbReference type="ChEBI" id="CHEBI:15354"/>
        <dbReference type="ChEBI" id="CHEBI:58389"/>
        <dbReference type="EC" id="4.3.99.4"/>
    </reaction>
</comment>
<comment type="biophysicochemical properties">
    <kinetics>
        <KM evidence="5">302.5 uM for choline</KM>
        <Vmax evidence="5">22.7 umol/min/mg enzyme</Vmax>
        <text evidence="5">kcat is 747 sec(-1). Kinetic parameters measured with a CutC -52 AA truncated variant.</text>
    </kinetics>
</comment>
<comment type="pathway">
    <text evidence="1 4">Amine and polyamine metabolism; choline degradation.</text>
</comment>
<comment type="subunit">
    <text evidence="5">Homodimer.</text>
</comment>
<comment type="PTM">
    <text evidence="1 4">Requires the activating protein CutD to generate the key active site glycyl radical on Gly-821 that is involved in catalysis.</text>
</comment>
<comment type="disruption phenotype">
    <text evidence="4">Cells lacking this gene are unable to grow on choline, in contrast to wild-type, and do not produce TMA.</text>
</comment>
<comment type="similarity">
    <text evidence="8">Belongs to the glycyl radical enzyme (GRE) family. CutC subfamily.</text>
</comment>